<organism>
    <name type="scientific">Nitrobacter winogradskyi (strain ATCC 25391 / DSM 10237 / CIP 104748 / NCIMB 11846 / Nb-255)</name>
    <dbReference type="NCBI Taxonomy" id="323098"/>
    <lineage>
        <taxon>Bacteria</taxon>
        <taxon>Pseudomonadati</taxon>
        <taxon>Pseudomonadota</taxon>
        <taxon>Alphaproteobacteria</taxon>
        <taxon>Hyphomicrobiales</taxon>
        <taxon>Nitrobacteraceae</taxon>
        <taxon>Nitrobacter</taxon>
    </lineage>
</organism>
<protein>
    <recommendedName>
        <fullName evidence="1">Ribosomal RNA small subunit methyltransferase H</fullName>
        <ecNumber evidence="1">2.1.1.199</ecNumber>
    </recommendedName>
    <alternativeName>
        <fullName evidence="1">16S rRNA m(4)C1402 methyltransferase</fullName>
    </alternativeName>
    <alternativeName>
        <fullName evidence="1">rRNA (cytosine-N(4)-)-methyltransferase RsmH</fullName>
    </alternativeName>
</protein>
<keyword id="KW-0963">Cytoplasm</keyword>
<keyword id="KW-0489">Methyltransferase</keyword>
<keyword id="KW-1185">Reference proteome</keyword>
<keyword id="KW-0698">rRNA processing</keyword>
<keyword id="KW-0949">S-adenosyl-L-methionine</keyword>
<keyword id="KW-0808">Transferase</keyword>
<comment type="function">
    <text evidence="1">Specifically methylates the N4 position of cytidine in position 1402 (C1402) of 16S rRNA.</text>
</comment>
<comment type="catalytic activity">
    <reaction evidence="1">
        <text>cytidine(1402) in 16S rRNA + S-adenosyl-L-methionine = N(4)-methylcytidine(1402) in 16S rRNA + S-adenosyl-L-homocysteine + H(+)</text>
        <dbReference type="Rhea" id="RHEA:42928"/>
        <dbReference type="Rhea" id="RHEA-COMP:10286"/>
        <dbReference type="Rhea" id="RHEA-COMP:10287"/>
        <dbReference type="ChEBI" id="CHEBI:15378"/>
        <dbReference type="ChEBI" id="CHEBI:57856"/>
        <dbReference type="ChEBI" id="CHEBI:59789"/>
        <dbReference type="ChEBI" id="CHEBI:74506"/>
        <dbReference type="ChEBI" id="CHEBI:82748"/>
        <dbReference type="EC" id="2.1.1.199"/>
    </reaction>
</comment>
<comment type="subcellular location">
    <subcellularLocation>
        <location evidence="1">Cytoplasm</location>
    </subcellularLocation>
</comment>
<comment type="similarity">
    <text evidence="1">Belongs to the methyltransferase superfamily. RsmH family.</text>
</comment>
<proteinExistence type="inferred from homology"/>
<reference key="1">
    <citation type="journal article" date="2006" name="Appl. Environ. Microbiol.">
        <title>Genome sequence of the chemolithoautotrophic nitrite-oxidizing bacterium Nitrobacter winogradskyi Nb-255.</title>
        <authorList>
            <person name="Starkenburg S.R."/>
            <person name="Chain P.S.G."/>
            <person name="Sayavedra-Soto L.A."/>
            <person name="Hauser L."/>
            <person name="Land M.L."/>
            <person name="Larimer F.W."/>
            <person name="Malfatti S.A."/>
            <person name="Klotz M.G."/>
            <person name="Bottomley P.J."/>
            <person name="Arp D.J."/>
            <person name="Hickey W.J."/>
        </authorList>
    </citation>
    <scope>NUCLEOTIDE SEQUENCE [LARGE SCALE GENOMIC DNA]</scope>
    <source>
        <strain>ATCC 25391 / DSM 10237 / CIP 104748 / NCIMB 11846 / Nb-255</strain>
    </source>
</reference>
<feature type="chain" id="PRO_0000223549" description="Ribosomal RNA small subunit methyltransferase H">
    <location>
        <begin position="1"/>
        <end position="332"/>
    </location>
</feature>
<feature type="binding site" evidence="1">
    <location>
        <begin position="36"/>
        <end position="38"/>
    </location>
    <ligand>
        <name>S-adenosyl-L-methionine</name>
        <dbReference type="ChEBI" id="CHEBI:59789"/>
    </ligand>
</feature>
<feature type="binding site" evidence="1">
    <location>
        <position position="54"/>
    </location>
    <ligand>
        <name>S-adenosyl-L-methionine</name>
        <dbReference type="ChEBI" id="CHEBI:59789"/>
    </ligand>
</feature>
<feature type="binding site" evidence="1">
    <location>
        <position position="81"/>
    </location>
    <ligand>
        <name>S-adenosyl-L-methionine</name>
        <dbReference type="ChEBI" id="CHEBI:59789"/>
    </ligand>
</feature>
<feature type="binding site" evidence="1">
    <location>
        <position position="102"/>
    </location>
    <ligand>
        <name>S-adenosyl-L-methionine</name>
        <dbReference type="ChEBI" id="CHEBI:59789"/>
    </ligand>
</feature>
<feature type="binding site" evidence="1">
    <location>
        <position position="109"/>
    </location>
    <ligand>
        <name>S-adenosyl-L-methionine</name>
        <dbReference type="ChEBI" id="CHEBI:59789"/>
    </ligand>
</feature>
<evidence type="ECO:0000255" key="1">
    <source>
        <dbReference type="HAMAP-Rule" id="MF_01007"/>
    </source>
</evidence>
<gene>
    <name evidence="1" type="primary">rsmH</name>
    <name type="synonym">mraW</name>
    <name type="ordered locus">Nwi_1043</name>
</gene>
<dbReference type="EC" id="2.1.1.199" evidence="1"/>
<dbReference type="EMBL" id="CP000115">
    <property type="protein sequence ID" value="ABA04305.1"/>
    <property type="molecule type" value="Genomic_DNA"/>
</dbReference>
<dbReference type="RefSeq" id="WP_011314339.1">
    <property type="nucleotide sequence ID" value="NC_007406.1"/>
</dbReference>
<dbReference type="SMR" id="Q3STT6"/>
<dbReference type="STRING" id="323098.Nwi_1043"/>
<dbReference type="KEGG" id="nwi:Nwi_1043"/>
<dbReference type="eggNOG" id="COG0275">
    <property type="taxonomic scope" value="Bacteria"/>
</dbReference>
<dbReference type="HOGENOM" id="CLU_038422_1_1_5"/>
<dbReference type="OrthoDB" id="9806637at2"/>
<dbReference type="Proteomes" id="UP000002531">
    <property type="component" value="Chromosome"/>
</dbReference>
<dbReference type="GO" id="GO:0005737">
    <property type="term" value="C:cytoplasm"/>
    <property type="evidence" value="ECO:0007669"/>
    <property type="project" value="UniProtKB-SubCell"/>
</dbReference>
<dbReference type="GO" id="GO:0071424">
    <property type="term" value="F:rRNA (cytosine-N4-)-methyltransferase activity"/>
    <property type="evidence" value="ECO:0007669"/>
    <property type="project" value="UniProtKB-UniRule"/>
</dbReference>
<dbReference type="GO" id="GO:0070475">
    <property type="term" value="P:rRNA base methylation"/>
    <property type="evidence" value="ECO:0007669"/>
    <property type="project" value="UniProtKB-UniRule"/>
</dbReference>
<dbReference type="FunFam" id="1.10.150.170:FF:000003">
    <property type="entry name" value="Ribosomal RNA small subunit methyltransferase H"/>
    <property type="match status" value="1"/>
</dbReference>
<dbReference type="Gene3D" id="1.10.150.170">
    <property type="entry name" value="Putative methyltransferase TM0872, insert domain"/>
    <property type="match status" value="1"/>
</dbReference>
<dbReference type="Gene3D" id="3.40.50.150">
    <property type="entry name" value="Vaccinia Virus protein VP39"/>
    <property type="match status" value="1"/>
</dbReference>
<dbReference type="HAMAP" id="MF_01007">
    <property type="entry name" value="16SrRNA_methyltr_H"/>
    <property type="match status" value="1"/>
</dbReference>
<dbReference type="InterPro" id="IPR002903">
    <property type="entry name" value="RsmH"/>
</dbReference>
<dbReference type="InterPro" id="IPR023397">
    <property type="entry name" value="SAM-dep_MeTrfase_MraW_recog"/>
</dbReference>
<dbReference type="InterPro" id="IPR029063">
    <property type="entry name" value="SAM-dependent_MTases_sf"/>
</dbReference>
<dbReference type="NCBIfam" id="TIGR00006">
    <property type="entry name" value="16S rRNA (cytosine(1402)-N(4))-methyltransferase RsmH"/>
    <property type="match status" value="1"/>
</dbReference>
<dbReference type="PANTHER" id="PTHR11265:SF0">
    <property type="entry name" value="12S RRNA N4-METHYLCYTIDINE METHYLTRANSFERASE"/>
    <property type="match status" value="1"/>
</dbReference>
<dbReference type="PANTHER" id="PTHR11265">
    <property type="entry name" value="S-ADENOSYL-METHYLTRANSFERASE MRAW"/>
    <property type="match status" value="1"/>
</dbReference>
<dbReference type="Pfam" id="PF01795">
    <property type="entry name" value="Methyltransf_5"/>
    <property type="match status" value="1"/>
</dbReference>
<dbReference type="PIRSF" id="PIRSF004486">
    <property type="entry name" value="MraW"/>
    <property type="match status" value="1"/>
</dbReference>
<dbReference type="SUPFAM" id="SSF81799">
    <property type="entry name" value="Putative methyltransferase TM0872, insert domain"/>
    <property type="match status" value="1"/>
</dbReference>
<dbReference type="SUPFAM" id="SSF53335">
    <property type="entry name" value="S-adenosyl-L-methionine-dependent methyltransferases"/>
    <property type="match status" value="1"/>
</dbReference>
<name>RSMH_NITWN</name>
<sequence>MTAPPIRHVPVLGREAVAMLAPRAGGVYVDATFGAGGYSRAILATAETRVIGIDRDPTAIAGGSGLVEESGGRLILVEDRFSHLAAVCAAQDAAAVDGVVMDVGVSSMQLDEAGRGFSFRLDGPLDMRMSGHGPTAAEVVARASETDLADIIYIFGEERRSRAVARAIVGARRHGPIATTRALADIVSKVVRAKPHEIHPATRTFQALRIFVNEELDELIAALAAAERVLKPGGRLAVVSFHSLEDRIVKNFLAWRGKTGGGSRHRPEIERAPPSFAILTKRPLTPGDDEVQANPRARSARLRAAERTDAAAIDDGAELPAWPSLANVMRGG</sequence>
<accession>Q3STT6</accession>